<sequence length="294" mass="33618">MIKIYNRKTKAYDVEQVAGLKYINWSYASPIGKSFLELFIKKKMFSKLYGNFCDSPLSKKKIKAFIDEFNIDMSLCNKNIDEFENFNDFFARTLTPEARPIDYSENILISPGDGRLSAFENIDLDKVVQIKGYTYSLKELIDDPKVAEEFEGGTCLILRLCPTDYHRFHFVDSGTCSESKKISGFYYSVNPIALNNVSELFCKNKREWSIFTSDNFGEILHVEVGATCVGTILQTYSPEKRVKKGEEKGYFKFGGSTTILFFKKDTIKIDSDIVEQTKLGFETKVNMGETIGHK</sequence>
<accession>Q0SWT6</accession>
<reference key="1">
    <citation type="journal article" date="2006" name="Genome Res.">
        <title>Skewed genomic variability in strains of the toxigenic bacterial pathogen, Clostridium perfringens.</title>
        <authorList>
            <person name="Myers G.S.A."/>
            <person name="Rasko D.A."/>
            <person name="Cheung J.K."/>
            <person name="Ravel J."/>
            <person name="Seshadri R."/>
            <person name="DeBoy R.T."/>
            <person name="Ren Q."/>
            <person name="Varga J."/>
            <person name="Awad M.M."/>
            <person name="Brinkac L.M."/>
            <person name="Daugherty S.C."/>
            <person name="Haft D.H."/>
            <person name="Dodson R.J."/>
            <person name="Madupu R."/>
            <person name="Nelson W.C."/>
            <person name="Rosovitz M.J."/>
            <person name="Sullivan S.A."/>
            <person name="Khouri H."/>
            <person name="Dimitrov G.I."/>
            <person name="Watkins K.L."/>
            <person name="Mulligan S."/>
            <person name="Benton J."/>
            <person name="Radune D."/>
            <person name="Fisher D.J."/>
            <person name="Atkins H.S."/>
            <person name="Hiscox T."/>
            <person name="Jost B.H."/>
            <person name="Billington S.J."/>
            <person name="Songer J.G."/>
            <person name="McClane B.A."/>
            <person name="Titball R.W."/>
            <person name="Rood J.I."/>
            <person name="Melville S.B."/>
            <person name="Paulsen I.T."/>
        </authorList>
    </citation>
    <scope>NUCLEOTIDE SEQUENCE [LARGE SCALE GENOMIC DNA]</scope>
    <source>
        <strain>SM101 / Type A</strain>
    </source>
</reference>
<gene>
    <name evidence="1" type="primary">psd</name>
    <name type="ordered locus">CPR_0033</name>
</gene>
<comment type="function">
    <text evidence="1">Catalyzes the formation of phosphatidylethanolamine (PtdEtn) from phosphatidylserine (PtdSer).</text>
</comment>
<comment type="catalytic activity">
    <reaction evidence="1">
        <text>a 1,2-diacyl-sn-glycero-3-phospho-L-serine + H(+) = a 1,2-diacyl-sn-glycero-3-phosphoethanolamine + CO2</text>
        <dbReference type="Rhea" id="RHEA:20828"/>
        <dbReference type="ChEBI" id="CHEBI:15378"/>
        <dbReference type="ChEBI" id="CHEBI:16526"/>
        <dbReference type="ChEBI" id="CHEBI:57262"/>
        <dbReference type="ChEBI" id="CHEBI:64612"/>
        <dbReference type="EC" id="4.1.1.65"/>
    </reaction>
</comment>
<comment type="cofactor">
    <cofactor evidence="1">
        <name>pyruvate</name>
        <dbReference type="ChEBI" id="CHEBI:15361"/>
    </cofactor>
    <text evidence="1">Binds 1 pyruvoyl group covalently per subunit.</text>
</comment>
<comment type="pathway">
    <text evidence="1">Phospholipid metabolism; phosphatidylethanolamine biosynthesis; phosphatidylethanolamine from CDP-diacylglycerol: step 2/2.</text>
</comment>
<comment type="subunit">
    <text evidence="1">Heterodimer of a large membrane-associated beta subunit and a small pyruvoyl-containing alpha subunit.</text>
</comment>
<comment type="subcellular location">
    <subcellularLocation>
        <location evidence="1">Cell membrane</location>
        <topology evidence="1">Peripheral membrane protein</topology>
    </subcellularLocation>
</comment>
<comment type="PTM">
    <text evidence="1">Is synthesized initially as an inactive proenzyme. Formation of the active enzyme involves a self-maturation process in which the active site pyruvoyl group is generated from an internal serine residue via an autocatalytic post-translational modification. Two non-identical subunits are generated from the proenzyme in this reaction, and the pyruvate is formed at the N-terminus of the alpha chain, which is derived from the carboxyl end of the proenzyme. The autoendoproteolytic cleavage occurs by a canonical serine protease mechanism, in which the side chain hydroxyl group of the serine supplies its oxygen atom to form the C-terminus of the beta chain, while the remainder of the serine residue undergoes an oxidative deamination to produce ammonia and the pyruvoyl prosthetic group on the alpha chain. During this reaction, the Ser that is part of the protease active site of the proenzyme becomes the pyruvoyl prosthetic group, which constitutes an essential element of the active site of the mature decarboxylase.</text>
</comment>
<comment type="similarity">
    <text evidence="1">Belongs to the phosphatidylserine decarboxylase family. PSD-B subfamily. Prokaryotic type II sub-subfamily.</text>
</comment>
<keyword id="KW-1003">Cell membrane</keyword>
<keyword id="KW-0210">Decarboxylase</keyword>
<keyword id="KW-0444">Lipid biosynthesis</keyword>
<keyword id="KW-0443">Lipid metabolism</keyword>
<keyword id="KW-0456">Lyase</keyword>
<keyword id="KW-0472">Membrane</keyword>
<keyword id="KW-0594">Phospholipid biosynthesis</keyword>
<keyword id="KW-1208">Phospholipid metabolism</keyword>
<keyword id="KW-0670">Pyruvate</keyword>
<keyword id="KW-0865">Zymogen</keyword>
<proteinExistence type="inferred from homology"/>
<evidence type="ECO:0000255" key="1">
    <source>
        <dbReference type="HAMAP-Rule" id="MF_00663"/>
    </source>
</evidence>
<organism>
    <name type="scientific">Clostridium perfringens (strain SM101 / Type A)</name>
    <dbReference type="NCBI Taxonomy" id="289380"/>
    <lineage>
        <taxon>Bacteria</taxon>
        <taxon>Bacillati</taxon>
        <taxon>Bacillota</taxon>
        <taxon>Clostridia</taxon>
        <taxon>Eubacteriales</taxon>
        <taxon>Clostridiaceae</taxon>
        <taxon>Clostridium</taxon>
    </lineage>
</organism>
<protein>
    <recommendedName>
        <fullName evidence="1">Phosphatidylserine decarboxylase proenzyme</fullName>
        <ecNumber evidence="1">4.1.1.65</ecNumber>
    </recommendedName>
    <component>
        <recommendedName>
            <fullName evidence="1">Phosphatidylserine decarboxylase alpha chain</fullName>
        </recommendedName>
    </component>
    <component>
        <recommendedName>
            <fullName evidence="1">Phosphatidylserine decarboxylase beta chain</fullName>
        </recommendedName>
    </component>
</protein>
<name>PSD_CLOPS</name>
<dbReference type="EC" id="4.1.1.65" evidence="1"/>
<dbReference type="EMBL" id="CP000312">
    <property type="protein sequence ID" value="ABG86791.1"/>
    <property type="molecule type" value="Genomic_DNA"/>
</dbReference>
<dbReference type="RefSeq" id="WP_011591215.1">
    <property type="nucleotide sequence ID" value="NC_008262.1"/>
</dbReference>
<dbReference type="SMR" id="Q0SWT6"/>
<dbReference type="KEGG" id="cpr:CPR_0033"/>
<dbReference type="UniPathway" id="UPA00558">
    <property type="reaction ID" value="UER00616"/>
</dbReference>
<dbReference type="Proteomes" id="UP000001824">
    <property type="component" value="Chromosome"/>
</dbReference>
<dbReference type="GO" id="GO:0005886">
    <property type="term" value="C:plasma membrane"/>
    <property type="evidence" value="ECO:0007669"/>
    <property type="project" value="UniProtKB-SubCell"/>
</dbReference>
<dbReference type="GO" id="GO:0004609">
    <property type="term" value="F:phosphatidylserine decarboxylase activity"/>
    <property type="evidence" value="ECO:0007669"/>
    <property type="project" value="UniProtKB-UniRule"/>
</dbReference>
<dbReference type="GO" id="GO:0006646">
    <property type="term" value="P:phosphatidylethanolamine biosynthetic process"/>
    <property type="evidence" value="ECO:0007669"/>
    <property type="project" value="UniProtKB-UniRule"/>
</dbReference>
<dbReference type="HAMAP" id="MF_00663">
    <property type="entry name" value="PS_decarb_PSD_B_type2"/>
    <property type="match status" value="1"/>
</dbReference>
<dbReference type="InterPro" id="IPR003817">
    <property type="entry name" value="PS_Dcarbxylase"/>
</dbReference>
<dbReference type="InterPro" id="IPR033177">
    <property type="entry name" value="PSD-B"/>
</dbReference>
<dbReference type="InterPro" id="IPR033179">
    <property type="entry name" value="PSD_type2_pro"/>
</dbReference>
<dbReference type="NCBIfam" id="NF001941">
    <property type="entry name" value="PRK00723.1"/>
    <property type="match status" value="1"/>
</dbReference>
<dbReference type="NCBIfam" id="TIGR00163">
    <property type="entry name" value="PS_decarb"/>
    <property type="match status" value="1"/>
</dbReference>
<dbReference type="PANTHER" id="PTHR10067">
    <property type="entry name" value="PHOSPHATIDYLSERINE DECARBOXYLASE"/>
    <property type="match status" value="1"/>
</dbReference>
<dbReference type="PANTHER" id="PTHR10067:SF17">
    <property type="entry name" value="PHOSPHATIDYLSERINE DECARBOXYLASE PROENZYME 2"/>
    <property type="match status" value="1"/>
</dbReference>
<dbReference type="Pfam" id="PF02666">
    <property type="entry name" value="PS_Dcarbxylase"/>
    <property type="match status" value="1"/>
</dbReference>
<feature type="chain" id="PRO_1000026618" description="Phosphatidylserine decarboxylase beta chain" evidence="1">
    <location>
        <begin position="1"/>
        <end position="255"/>
    </location>
</feature>
<feature type="chain" id="PRO_1000026619" description="Phosphatidylserine decarboxylase alpha chain" evidence="1">
    <location>
        <begin position="256"/>
        <end position="294"/>
    </location>
</feature>
<feature type="active site" description="Charge relay system; for autoendoproteolytic cleavage activity" evidence="1">
    <location>
        <position position="113"/>
    </location>
</feature>
<feature type="active site" description="Charge relay system; for autoendoproteolytic cleavage activity" evidence="1">
    <location>
        <position position="169"/>
    </location>
</feature>
<feature type="active site" description="Charge relay system; for autoendoproteolytic cleavage activity" evidence="1">
    <location>
        <position position="256"/>
    </location>
</feature>
<feature type="active site" description="Schiff-base intermediate with substrate; via pyruvic acid; for decarboxylase activity" evidence="1">
    <location>
        <position position="256"/>
    </location>
</feature>
<feature type="site" description="Cleavage (non-hydrolytic); by autocatalysis" evidence="1">
    <location>
        <begin position="255"/>
        <end position="256"/>
    </location>
</feature>
<feature type="modified residue" description="Pyruvic acid (Ser); by autocatalysis" evidence="1">
    <location>
        <position position="256"/>
    </location>
</feature>